<evidence type="ECO:0000250" key="1"/>
<evidence type="ECO:0000250" key="2">
    <source>
        <dbReference type="UniProtKB" id="P08842"/>
    </source>
</evidence>
<evidence type="ECO:0000255" key="3"/>
<evidence type="ECO:0000269" key="4">
    <source>
    </source>
</evidence>
<evidence type="ECO:0000305" key="5"/>
<gene>
    <name type="primary">Sts</name>
</gene>
<accession>P15589</accession>
<protein>
    <recommendedName>
        <fullName>Steryl-sulfatase</fullName>
        <ecNumber evidence="2">3.1.6.2</ecNumber>
    </recommendedName>
    <alternativeName>
        <fullName>Arylsulfatase C</fullName>
        <shortName>ASC</shortName>
    </alternativeName>
    <alternativeName>
        <fullName>Steroid sulfatase</fullName>
    </alternativeName>
    <alternativeName>
        <fullName>Steryl-sulfate sulfohydrolase</fullName>
    </alternativeName>
</protein>
<feature type="signal peptide" evidence="4">
    <location>
        <begin position="1"/>
        <end position="19"/>
    </location>
</feature>
<feature type="chain" id="PRO_0000033416" description="Steryl-sulfatase">
    <location>
        <begin position="20"/>
        <end position="577"/>
    </location>
</feature>
<feature type="topological domain" description="Lumenal" evidence="2">
    <location>
        <begin position="21"/>
        <end position="183"/>
    </location>
</feature>
<feature type="transmembrane region" description="Helical" evidence="2">
    <location>
        <begin position="184"/>
        <end position="207"/>
    </location>
</feature>
<feature type="topological domain" description="Cytoplasmic" evidence="2">
    <location>
        <begin position="208"/>
        <end position="211"/>
    </location>
</feature>
<feature type="transmembrane region" description="Helical" evidence="2">
    <location>
        <begin position="212"/>
        <end position="233"/>
    </location>
</feature>
<feature type="topological domain" description="Lumenal" evidence="2">
    <location>
        <begin position="234"/>
        <end position="577"/>
    </location>
</feature>
<feature type="active site" description="Nucleophile" evidence="2">
    <location>
        <position position="74"/>
    </location>
</feature>
<feature type="active site" evidence="2">
    <location>
        <position position="135"/>
    </location>
</feature>
<feature type="binding site" evidence="2">
    <location>
        <position position="34"/>
    </location>
    <ligand>
        <name>Ca(2+)</name>
        <dbReference type="ChEBI" id="CHEBI:29108"/>
    </ligand>
</feature>
<feature type="binding site" evidence="2">
    <location>
        <position position="35"/>
    </location>
    <ligand>
        <name>Ca(2+)</name>
        <dbReference type="ChEBI" id="CHEBI:29108"/>
    </ligand>
</feature>
<feature type="binding site" description="via 3-oxoalanine" evidence="1">
    <location>
        <position position="74"/>
    </location>
    <ligand>
        <name>Ca(2+)</name>
        <dbReference type="ChEBI" id="CHEBI:29108"/>
    </ligand>
</feature>
<feature type="binding site" evidence="2">
    <location>
        <position position="341"/>
    </location>
    <ligand>
        <name>Ca(2+)</name>
        <dbReference type="ChEBI" id="CHEBI:29108"/>
    </ligand>
</feature>
<feature type="binding site" evidence="2">
    <location>
        <position position="342"/>
    </location>
    <ligand>
        <name>Ca(2+)</name>
        <dbReference type="ChEBI" id="CHEBI:29108"/>
    </ligand>
</feature>
<feature type="modified residue" description="3-oxoalanine (Cys)" evidence="2">
    <location>
        <position position="74"/>
    </location>
</feature>
<feature type="glycosylation site" description="N-linked (GlcNAc...) asparagine" evidence="3">
    <location>
        <position position="46"/>
    </location>
</feature>
<feature type="glycosylation site" description="N-linked (GlcNAc...) asparagine" evidence="3">
    <location>
        <position position="332"/>
    </location>
</feature>
<feature type="glycosylation site" description="N-linked (GlcNAc...) asparagine" evidence="3">
    <location>
        <position position="458"/>
    </location>
</feature>
<feature type="disulfide bond" evidence="1">
    <location>
        <begin position="140"/>
        <end position="147"/>
    </location>
</feature>
<feature type="disulfide bond" evidence="1">
    <location>
        <begin position="169"/>
        <end position="241"/>
    </location>
</feature>
<feature type="disulfide bond" evidence="1">
    <location>
        <begin position="445"/>
        <end position="488"/>
    </location>
</feature>
<feature type="disulfide bond" evidence="1">
    <location>
        <begin position="480"/>
        <end position="486"/>
    </location>
</feature>
<feature type="disulfide bond" evidence="1">
    <location>
        <begin position="561"/>
        <end position="571"/>
    </location>
</feature>
<reference key="1">
    <citation type="submission" date="1995-11" db="EMBL/GenBank/DDBJ databases">
        <authorList>
            <person name="Li X.M."/>
            <person name="Salido E.C."/>
            <person name="Gong Y."/>
            <person name="Yen P.H."/>
            <person name="Kitada Y."/>
            <person name="Serikawa T."/>
            <person name="Shapiro L.J."/>
        </authorList>
    </citation>
    <scope>NUCLEOTIDE SEQUENCE [MRNA]</scope>
    <source>
        <strain>Sprague-Dawley</strain>
    </source>
</reference>
<reference key="2">
    <citation type="journal article" date="1989" name="Biochim. Biophys. Acta">
        <title>Characterization of rat and human steroid sulfatases.</title>
        <authorList>
            <person name="Kawano J."/>
            <person name="Kotani T."/>
            <person name="Ohtaki S."/>
            <person name="Minamino N."/>
            <person name="Matsuo H."/>
            <person name="Oinuma T."/>
            <person name="Aikawa E."/>
        </authorList>
    </citation>
    <scope>PROTEIN SEQUENCE OF 20-45</scope>
    <source>
        <tissue>Liver</tissue>
    </source>
</reference>
<organism>
    <name type="scientific">Rattus norvegicus</name>
    <name type="common">Rat</name>
    <dbReference type="NCBI Taxonomy" id="10116"/>
    <lineage>
        <taxon>Eukaryota</taxon>
        <taxon>Metazoa</taxon>
        <taxon>Chordata</taxon>
        <taxon>Craniata</taxon>
        <taxon>Vertebrata</taxon>
        <taxon>Euteleostomi</taxon>
        <taxon>Mammalia</taxon>
        <taxon>Eutheria</taxon>
        <taxon>Euarchontoglires</taxon>
        <taxon>Glires</taxon>
        <taxon>Rodentia</taxon>
        <taxon>Myomorpha</taxon>
        <taxon>Muroidea</taxon>
        <taxon>Muridae</taxon>
        <taxon>Murinae</taxon>
        <taxon>Rattus</taxon>
    </lineage>
</organism>
<comment type="function">
    <text evidence="2">Catalyzes the conversion of sulfated steroid precursors, such as dehydroepiandrosterone sulfate (DHEA-S) and estrone sulfate to the free steroid.</text>
</comment>
<comment type="catalytic activity">
    <reaction evidence="2">
        <text>dehydroepiandrosterone 3-sulfate + H2O = 3beta-hydroxyandrost-5-en-17-one + sulfate + H(+)</text>
        <dbReference type="Rhea" id="RHEA:19873"/>
        <dbReference type="ChEBI" id="CHEBI:15377"/>
        <dbReference type="ChEBI" id="CHEBI:15378"/>
        <dbReference type="ChEBI" id="CHEBI:16189"/>
        <dbReference type="ChEBI" id="CHEBI:28689"/>
        <dbReference type="ChEBI" id="CHEBI:57905"/>
        <dbReference type="EC" id="3.1.6.2"/>
    </reaction>
</comment>
<comment type="catalytic activity">
    <reaction evidence="2">
        <text>estrone 3-sulfate + H2O = estrone + sulfate + H(+)</text>
        <dbReference type="Rhea" id="RHEA:31055"/>
        <dbReference type="ChEBI" id="CHEBI:15377"/>
        <dbReference type="ChEBI" id="CHEBI:15378"/>
        <dbReference type="ChEBI" id="CHEBI:16189"/>
        <dbReference type="ChEBI" id="CHEBI:17263"/>
        <dbReference type="ChEBI" id="CHEBI:60050"/>
    </reaction>
</comment>
<comment type="cofactor">
    <cofactor evidence="2">
        <name>Ca(2+)</name>
        <dbReference type="ChEBI" id="CHEBI:29108"/>
    </cofactor>
    <text evidence="2">Binds 1 Ca(2+) ion per subunit.</text>
</comment>
<comment type="subunit">
    <text evidence="2">Homodimer.</text>
</comment>
<comment type="subcellular location">
    <subcellularLocation>
        <location evidence="2">Microsome membrane</location>
        <topology>Multi-pass membrane protein</topology>
    </subcellularLocation>
    <subcellularLocation>
        <location evidence="2">Endoplasmic reticulum membrane</location>
        <topology evidence="5">Multi-pass membrane protein</topology>
    </subcellularLocation>
    <text>The sequence shows several membrane-spanning domains that could serve to anchor the protein in the microsomal membrane.</text>
</comment>
<comment type="PTM">
    <text evidence="2">The conversion to 3-oxoalanine (also known as C-formylglycine, FGly), of a serine or cysteine residue in prokaryotes and of a cysteine residue in eukaryotes, is critical for catalytic activity.</text>
</comment>
<comment type="similarity">
    <text evidence="5">Belongs to the sulfatase family.</text>
</comment>
<dbReference type="EC" id="3.1.6.2" evidence="2"/>
<dbReference type="EMBL" id="U37138">
    <property type="protein sequence ID" value="AAC53097.1"/>
    <property type="molecule type" value="mRNA"/>
</dbReference>
<dbReference type="PIR" id="S05414">
    <property type="entry name" value="S05414"/>
</dbReference>
<dbReference type="RefSeq" id="NP_036793.1">
    <property type="nucleotide sequence ID" value="NM_012661.1"/>
</dbReference>
<dbReference type="SMR" id="P15589"/>
<dbReference type="FunCoup" id="P15589">
    <property type="interactions" value="26"/>
</dbReference>
<dbReference type="STRING" id="10116.ENSRNOP00000043915"/>
<dbReference type="BindingDB" id="P15589"/>
<dbReference type="ChEMBL" id="CHEMBL3531"/>
<dbReference type="GlyCosmos" id="P15589">
    <property type="glycosylation" value="3 sites, No reported glycans"/>
</dbReference>
<dbReference type="GlyGen" id="P15589">
    <property type="glycosylation" value="4 sites"/>
</dbReference>
<dbReference type="PhosphoSitePlus" id="P15589"/>
<dbReference type="PaxDb" id="10116-ENSRNOP00000043915"/>
<dbReference type="GeneID" id="24800"/>
<dbReference type="KEGG" id="rno:24800"/>
<dbReference type="AGR" id="RGD:3783"/>
<dbReference type="CTD" id="412"/>
<dbReference type="RGD" id="3783">
    <property type="gene designation" value="Sts"/>
</dbReference>
<dbReference type="eggNOG" id="KOG3867">
    <property type="taxonomic scope" value="Eukaryota"/>
</dbReference>
<dbReference type="InParanoid" id="P15589"/>
<dbReference type="PhylomeDB" id="P15589"/>
<dbReference type="Reactome" id="R-RNO-1663150">
    <property type="pathway name" value="The activation of arylsulfatases"/>
</dbReference>
<dbReference type="Reactome" id="R-RNO-196071">
    <property type="pathway name" value="Metabolism of steroid hormones"/>
</dbReference>
<dbReference type="Reactome" id="R-RNO-9840310">
    <property type="pathway name" value="Glycosphingolipid catabolism"/>
</dbReference>
<dbReference type="PRO" id="PR:P15589"/>
<dbReference type="Proteomes" id="UP000002494">
    <property type="component" value="Unplaced"/>
</dbReference>
<dbReference type="GO" id="GO:0005789">
    <property type="term" value="C:endoplasmic reticulum membrane"/>
    <property type="evidence" value="ECO:0000314"/>
    <property type="project" value="RGD"/>
</dbReference>
<dbReference type="GO" id="GO:0005635">
    <property type="term" value="C:nuclear envelope"/>
    <property type="evidence" value="ECO:0000314"/>
    <property type="project" value="RGD"/>
</dbReference>
<dbReference type="GO" id="GO:0004065">
    <property type="term" value="F:arylsulfatase activity"/>
    <property type="evidence" value="ECO:0000318"/>
    <property type="project" value="GO_Central"/>
</dbReference>
<dbReference type="GO" id="GO:0046872">
    <property type="term" value="F:metal ion binding"/>
    <property type="evidence" value="ECO:0007669"/>
    <property type="project" value="UniProtKB-KW"/>
</dbReference>
<dbReference type="GO" id="GO:0004773">
    <property type="term" value="F:steryl-sulfatase activity"/>
    <property type="evidence" value="ECO:0000314"/>
    <property type="project" value="RGD"/>
</dbReference>
<dbReference type="GO" id="GO:0008484">
    <property type="term" value="F:sulfuric ester hydrolase activity"/>
    <property type="evidence" value="ECO:0000266"/>
    <property type="project" value="RGD"/>
</dbReference>
<dbReference type="GO" id="GO:0007565">
    <property type="term" value="P:female pregnancy"/>
    <property type="evidence" value="ECO:0007669"/>
    <property type="project" value="UniProtKB-KW"/>
</dbReference>
<dbReference type="GO" id="GO:0007611">
    <property type="term" value="P:learning or memory"/>
    <property type="evidence" value="ECO:0000315"/>
    <property type="project" value="RGD"/>
</dbReference>
<dbReference type="GO" id="GO:0008284">
    <property type="term" value="P:positive regulation of cell population proliferation"/>
    <property type="evidence" value="ECO:0000315"/>
    <property type="project" value="RGD"/>
</dbReference>
<dbReference type="GO" id="GO:0043627">
    <property type="term" value="P:response to estrogen"/>
    <property type="evidence" value="ECO:0000314"/>
    <property type="project" value="RGD"/>
</dbReference>
<dbReference type="GO" id="GO:0043434">
    <property type="term" value="P:response to peptide hormone"/>
    <property type="evidence" value="ECO:0000314"/>
    <property type="project" value="RGD"/>
</dbReference>
<dbReference type="GO" id="GO:0009268">
    <property type="term" value="P:response to pH"/>
    <property type="evidence" value="ECO:0000314"/>
    <property type="project" value="RGD"/>
</dbReference>
<dbReference type="GO" id="GO:0043588">
    <property type="term" value="P:skin development"/>
    <property type="evidence" value="ECO:0000270"/>
    <property type="project" value="RGD"/>
</dbReference>
<dbReference type="GO" id="GO:0008202">
    <property type="term" value="P:steroid metabolic process"/>
    <property type="evidence" value="ECO:0007669"/>
    <property type="project" value="UniProtKB-KW"/>
</dbReference>
<dbReference type="FunFam" id="3.30.1120.10:FF:000001">
    <property type="entry name" value="Arylsulfatase E"/>
    <property type="match status" value="1"/>
</dbReference>
<dbReference type="FunFam" id="1.10.287.550:FF:000005">
    <property type="entry name" value="Steryl-sulfatase"/>
    <property type="match status" value="1"/>
</dbReference>
<dbReference type="Gene3D" id="3.30.1120.10">
    <property type="match status" value="1"/>
</dbReference>
<dbReference type="Gene3D" id="3.40.720.10">
    <property type="entry name" value="Alkaline Phosphatase, subunit A"/>
    <property type="match status" value="1"/>
</dbReference>
<dbReference type="Gene3D" id="1.10.287.550">
    <property type="entry name" value="Helix hairpin bin"/>
    <property type="match status" value="1"/>
</dbReference>
<dbReference type="InterPro" id="IPR017850">
    <property type="entry name" value="Alkaline_phosphatase_core_sf"/>
</dbReference>
<dbReference type="InterPro" id="IPR050738">
    <property type="entry name" value="Sulfatase"/>
</dbReference>
<dbReference type="InterPro" id="IPR024607">
    <property type="entry name" value="Sulfatase_CS"/>
</dbReference>
<dbReference type="InterPro" id="IPR000917">
    <property type="entry name" value="Sulfatase_N"/>
</dbReference>
<dbReference type="PANTHER" id="PTHR42693">
    <property type="entry name" value="ARYLSULFATASE FAMILY MEMBER"/>
    <property type="match status" value="1"/>
</dbReference>
<dbReference type="PANTHER" id="PTHR42693:SF9">
    <property type="entry name" value="STERYL-SULFATASE"/>
    <property type="match status" value="1"/>
</dbReference>
<dbReference type="Pfam" id="PF00884">
    <property type="entry name" value="Sulfatase"/>
    <property type="match status" value="1"/>
</dbReference>
<dbReference type="Pfam" id="PF14707">
    <property type="entry name" value="Sulfatase_C"/>
    <property type="match status" value="1"/>
</dbReference>
<dbReference type="SUPFAM" id="SSF53649">
    <property type="entry name" value="Alkaline phosphatase-like"/>
    <property type="match status" value="1"/>
</dbReference>
<dbReference type="PROSITE" id="PS00523">
    <property type="entry name" value="SULFATASE_1"/>
    <property type="match status" value="1"/>
</dbReference>
<dbReference type="PROSITE" id="PS00149">
    <property type="entry name" value="SULFATASE_2"/>
    <property type="match status" value="1"/>
</dbReference>
<sequence length="577" mass="62679">MLWPCLLALLLSQLNFLCAARPGPGPNFLLIMADDLGIGDLGCYGNRTLRTPHIDRLALEGVKLTQHLAAAPLCTPSRAAFLTGRYPVRSGMASHGRLGVFLFSASSGGLPPNEVTFAKLLKGQGYTTGLVGKWHLGLSCQAASDFCHHPGRHGFDRFLGTPTTNLRDCKPGGGTVFGSAQQVFVVLPMNILGAVLLAMALARWAGLARPPGWVFGVTVAAMAAVGGAYVAFLYHFRPANCFLMADFTITQQPTDYKGLTQRLASEAGDFLRRNRDTPFLLFLSFMHVHTAHFANPEFAGQSLHGAYGDAVEEMDWAVGQVLATLDKLGLANNTLVYLTSDHGAHVEELGPNGERHGGSNGIYRGGKANTWEGGIRVPGLVRWPGVIVPGQEVEEPTSNMDVFPTVARLAGAELPTDRVIDGRDLMPLLLGHVQHSEHEFLFHYCNAYLSAVAWRPHNSSSVWKAFYFTPNFDPPGSNGCFSTHVCMCHGHHVTHHDPPLLFDIARDPRERHPLTPETEPRHGEILRNMDAAARAHVATLEEAPNQLSMSNVAWKPWLQLCLPSKPHPLACRCAGDG</sequence>
<name>STS_RAT</name>
<keyword id="KW-0106">Calcium</keyword>
<keyword id="KW-0903">Direct protein sequencing</keyword>
<keyword id="KW-1015">Disulfide bond</keyword>
<keyword id="KW-0256">Endoplasmic reticulum</keyword>
<keyword id="KW-0325">Glycoprotein</keyword>
<keyword id="KW-0378">Hydrolase</keyword>
<keyword id="KW-0443">Lipid metabolism</keyword>
<keyword id="KW-0472">Membrane</keyword>
<keyword id="KW-0479">Metal-binding</keyword>
<keyword id="KW-0492">Microsome</keyword>
<keyword id="KW-0635">Pregnancy</keyword>
<keyword id="KW-1185">Reference proteome</keyword>
<keyword id="KW-0732">Signal</keyword>
<keyword id="KW-0753">Steroid metabolism</keyword>
<keyword id="KW-0812">Transmembrane</keyword>
<keyword id="KW-1133">Transmembrane helix</keyword>
<proteinExistence type="evidence at protein level"/>